<sequence>MANRKYFGTDGVRGKVGSYPITPDFALKLGWAAGKVLASQGSKMVLIGKDTRISGYMLESALEAGLAAAGLSAAFTGPMPTPAIAYLTRTFRAEAGIVISASHNPYYDNGIKFFSAKGTKLPDEIEEAIEAMLEQPMDCVESAELGKASRINDAAGRYIEFCKGTFPAHLGLEGYKIVVDCANGATYHIAPNVLRELGAEVIEIGTDPNGLNINEKCGATDVTALQAKVVETKADVGLAYDGDGDRIMMVDHLGNKVDGDQILFIIAREALRSGQLKGGVVGTLMSNMSLEIALKMLGVPFLRANVGDRYVLEKMLENDWTLGGENSGHIIIADKNTTGDGIVASLAVLAAMAQHKLSLNELASAVKLFPQVLINVRFAGGENPLESDAVKSVAAEVEKRLEGKGRILLRKSGTEPLIRVMVECQDAELAQQCAEEIAEAVKKIN</sequence>
<organism>
    <name type="scientific">Haemophilus influenzae (strain 86-028NP)</name>
    <dbReference type="NCBI Taxonomy" id="281310"/>
    <lineage>
        <taxon>Bacteria</taxon>
        <taxon>Pseudomonadati</taxon>
        <taxon>Pseudomonadota</taxon>
        <taxon>Gammaproteobacteria</taxon>
        <taxon>Pasteurellales</taxon>
        <taxon>Pasteurellaceae</taxon>
        <taxon>Haemophilus</taxon>
    </lineage>
</organism>
<keyword id="KW-0413">Isomerase</keyword>
<keyword id="KW-0460">Magnesium</keyword>
<keyword id="KW-0479">Metal-binding</keyword>
<keyword id="KW-0597">Phosphoprotein</keyword>
<protein>
    <recommendedName>
        <fullName evidence="1">Phosphoglucosamine mutase</fullName>
        <ecNumber evidence="1">5.4.2.10</ecNumber>
    </recommendedName>
</protein>
<proteinExistence type="inferred from homology"/>
<comment type="function">
    <text evidence="1">Catalyzes the conversion of glucosamine-6-phosphate to glucosamine-1-phosphate.</text>
</comment>
<comment type="catalytic activity">
    <reaction evidence="1">
        <text>alpha-D-glucosamine 1-phosphate = D-glucosamine 6-phosphate</text>
        <dbReference type="Rhea" id="RHEA:23424"/>
        <dbReference type="ChEBI" id="CHEBI:58516"/>
        <dbReference type="ChEBI" id="CHEBI:58725"/>
        <dbReference type="EC" id="5.4.2.10"/>
    </reaction>
</comment>
<comment type="cofactor">
    <cofactor evidence="1">
        <name>Mg(2+)</name>
        <dbReference type="ChEBI" id="CHEBI:18420"/>
    </cofactor>
    <text evidence="1">Binds 1 Mg(2+) ion per subunit.</text>
</comment>
<comment type="PTM">
    <text evidence="1">Activated by phosphorylation.</text>
</comment>
<comment type="similarity">
    <text evidence="1">Belongs to the phosphohexose mutase family.</text>
</comment>
<feature type="chain" id="PRO_0000147897" description="Phosphoglucosamine mutase">
    <location>
        <begin position="1"/>
        <end position="445"/>
    </location>
</feature>
<feature type="active site" description="Phosphoserine intermediate" evidence="1">
    <location>
        <position position="102"/>
    </location>
</feature>
<feature type="binding site" description="via phosphate group" evidence="1">
    <location>
        <position position="102"/>
    </location>
    <ligand>
        <name>Mg(2+)</name>
        <dbReference type="ChEBI" id="CHEBI:18420"/>
    </ligand>
</feature>
<feature type="binding site" evidence="1">
    <location>
        <position position="241"/>
    </location>
    <ligand>
        <name>Mg(2+)</name>
        <dbReference type="ChEBI" id="CHEBI:18420"/>
    </ligand>
</feature>
<feature type="binding site" evidence="1">
    <location>
        <position position="243"/>
    </location>
    <ligand>
        <name>Mg(2+)</name>
        <dbReference type="ChEBI" id="CHEBI:18420"/>
    </ligand>
</feature>
<feature type="binding site" evidence="1">
    <location>
        <position position="245"/>
    </location>
    <ligand>
        <name>Mg(2+)</name>
        <dbReference type="ChEBI" id="CHEBI:18420"/>
    </ligand>
</feature>
<feature type="modified residue" description="Phosphoserine" evidence="1">
    <location>
        <position position="102"/>
    </location>
</feature>
<dbReference type="EC" id="5.4.2.10" evidence="1"/>
<dbReference type="EMBL" id="CP000057">
    <property type="protein sequence ID" value="AAX88458.1"/>
    <property type="molecule type" value="Genomic_DNA"/>
</dbReference>
<dbReference type="RefSeq" id="WP_011272587.1">
    <property type="nucleotide sequence ID" value="NC_007146.2"/>
</dbReference>
<dbReference type="SMR" id="Q4QKI9"/>
<dbReference type="KEGG" id="hit:NTHI1664"/>
<dbReference type="HOGENOM" id="CLU_016950_7_0_6"/>
<dbReference type="Proteomes" id="UP000002525">
    <property type="component" value="Chromosome"/>
</dbReference>
<dbReference type="GO" id="GO:0005829">
    <property type="term" value="C:cytosol"/>
    <property type="evidence" value="ECO:0007669"/>
    <property type="project" value="TreeGrafter"/>
</dbReference>
<dbReference type="GO" id="GO:0000287">
    <property type="term" value="F:magnesium ion binding"/>
    <property type="evidence" value="ECO:0007669"/>
    <property type="project" value="UniProtKB-UniRule"/>
</dbReference>
<dbReference type="GO" id="GO:0008966">
    <property type="term" value="F:phosphoglucosamine mutase activity"/>
    <property type="evidence" value="ECO:0007669"/>
    <property type="project" value="UniProtKB-UniRule"/>
</dbReference>
<dbReference type="GO" id="GO:0004615">
    <property type="term" value="F:phosphomannomutase activity"/>
    <property type="evidence" value="ECO:0007669"/>
    <property type="project" value="TreeGrafter"/>
</dbReference>
<dbReference type="GO" id="GO:0005975">
    <property type="term" value="P:carbohydrate metabolic process"/>
    <property type="evidence" value="ECO:0007669"/>
    <property type="project" value="InterPro"/>
</dbReference>
<dbReference type="GO" id="GO:0009252">
    <property type="term" value="P:peptidoglycan biosynthetic process"/>
    <property type="evidence" value="ECO:0007669"/>
    <property type="project" value="TreeGrafter"/>
</dbReference>
<dbReference type="GO" id="GO:0006048">
    <property type="term" value="P:UDP-N-acetylglucosamine biosynthetic process"/>
    <property type="evidence" value="ECO:0007669"/>
    <property type="project" value="TreeGrafter"/>
</dbReference>
<dbReference type="CDD" id="cd05802">
    <property type="entry name" value="GlmM"/>
    <property type="match status" value="1"/>
</dbReference>
<dbReference type="FunFam" id="3.30.310.50:FF:000001">
    <property type="entry name" value="Phosphoglucosamine mutase"/>
    <property type="match status" value="1"/>
</dbReference>
<dbReference type="FunFam" id="3.40.120.10:FF:000001">
    <property type="entry name" value="Phosphoglucosamine mutase"/>
    <property type="match status" value="1"/>
</dbReference>
<dbReference type="FunFam" id="3.40.120.10:FF:000003">
    <property type="entry name" value="Phosphoglucosamine mutase"/>
    <property type="match status" value="1"/>
</dbReference>
<dbReference type="Gene3D" id="3.40.120.10">
    <property type="entry name" value="Alpha-D-Glucose-1,6-Bisphosphate, subunit A, domain 3"/>
    <property type="match status" value="3"/>
</dbReference>
<dbReference type="Gene3D" id="3.30.310.50">
    <property type="entry name" value="Alpha-D-phosphohexomutase, C-terminal domain"/>
    <property type="match status" value="1"/>
</dbReference>
<dbReference type="HAMAP" id="MF_01554_B">
    <property type="entry name" value="GlmM_B"/>
    <property type="match status" value="1"/>
</dbReference>
<dbReference type="InterPro" id="IPR005844">
    <property type="entry name" value="A-D-PHexomutase_a/b/a-I"/>
</dbReference>
<dbReference type="InterPro" id="IPR016055">
    <property type="entry name" value="A-D-PHexomutase_a/b/a-I/II/III"/>
</dbReference>
<dbReference type="InterPro" id="IPR005845">
    <property type="entry name" value="A-D-PHexomutase_a/b/a-II"/>
</dbReference>
<dbReference type="InterPro" id="IPR005846">
    <property type="entry name" value="A-D-PHexomutase_a/b/a-III"/>
</dbReference>
<dbReference type="InterPro" id="IPR005843">
    <property type="entry name" value="A-D-PHexomutase_C"/>
</dbReference>
<dbReference type="InterPro" id="IPR036900">
    <property type="entry name" value="A-D-PHexomutase_C_sf"/>
</dbReference>
<dbReference type="InterPro" id="IPR016066">
    <property type="entry name" value="A-D-PHexomutase_CS"/>
</dbReference>
<dbReference type="InterPro" id="IPR005841">
    <property type="entry name" value="Alpha-D-phosphohexomutase_SF"/>
</dbReference>
<dbReference type="InterPro" id="IPR006352">
    <property type="entry name" value="GlmM_bact"/>
</dbReference>
<dbReference type="InterPro" id="IPR050060">
    <property type="entry name" value="Phosphoglucosamine_mutase"/>
</dbReference>
<dbReference type="NCBIfam" id="TIGR01455">
    <property type="entry name" value="glmM"/>
    <property type="match status" value="1"/>
</dbReference>
<dbReference type="NCBIfam" id="NF008139">
    <property type="entry name" value="PRK10887.1"/>
    <property type="match status" value="1"/>
</dbReference>
<dbReference type="PANTHER" id="PTHR42946:SF1">
    <property type="entry name" value="PHOSPHOGLUCOMUTASE (ALPHA-D-GLUCOSE-1,6-BISPHOSPHATE-DEPENDENT)"/>
    <property type="match status" value="1"/>
</dbReference>
<dbReference type="PANTHER" id="PTHR42946">
    <property type="entry name" value="PHOSPHOHEXOSE MUTASE"/>
    <property type="match status" value="1"/>
</dbReference>
<dbReference type="Pfam" id="PF02878">
    <property type="entry name" value="PGM_PMM_I"/>
    <property type="match status" value="1"/>
</dbReference>
<dbReference type="Pfam" id="PF02879">
    <property type="entry name" value="PGM_PMM_II"/>
    <property type="match status" value="1"/>
</dbReference>
<dbReference type="Pfam" id="PF02880">
    <property type="entry name" value="PGM_PMM_III"/>
    <property type="match status" value="1"/>
</dbReference>
<dbReference type="Pfam" id="PF00408">
    <property type="entry name" value="PGM_PMM_IV"/>
    <property type="match status" value="1"/>
</dbReference>
<dbReference type="PRINTS" id="PR00509">
    <property type="entry name" value="PGMPMM"/>
</dbReference>
<dbReference type="SUPFAM" id="SSF55957">
    <property type="entry name" value="Phosphoglucomutase, C-terminal domain"/>
    <property type="match status" value="1"/>
</dbReference>
<dbReference type="SUPFAM" id="SSF53738">
    <property type="entry name" value="Phosphoglucomutase, first 3 domains"/>
    <property type="match status" value="3"/>
</dbReference>
<dbReference type="PROSITE" id="PS00710">
    <property type="entry name" value="PGM_PMM"/>
    <property type="match status" value="1"/>
</dbReference>
<accession>Q4QKI9</accession>
<reference key="1">
    <citation type="journal article" date="2005" name="J. Bacteriol.">
        <title>Genomic sequence of an otitis media isolate of nontypeable Haemophilus influenzae: comparative study with H. influenzae serotype d, strain KW20.</title>
        <authorList>
            <person name="Harrison A."/>
            <person name="Dyer D.W."/>
            <person name="Gillaspy A."/>
            <person name="Ray W.C."/>
            <person name="Mungur R."/>
            <person name="Carson M.B."/>
            <person name="Zhong H."/>
            <person name="Gipson J."/>
            <person name="Gipson M."/>
            <person name="Johnson L.S."/>
            <person name="Lewis L."/>
            <person name="Bakaletz L.O."/>
            <person name="Munson R.S. Jr."/>
        </authorList>
    </citation>
    <scope>NUCLEOTIDE SEQUENCE [LARGE SCALE GENOMIC DNA]</scope>
    <source>
        <strain>86-028NP</strain>
    </source>
</reference>
<evidence type="ECO:0000255" key="1">
    <source>
        <dbReference type="HAMAP-Rule" id="MF_01554"/>
    </source>
</evidence>
<gene>
    <name evidence="1" type="primary">glmM</name>
    <name type="ordered locus">NTHI1664</name>
</gene>
<name>GLMM_HAEI8</name>